<feature type="chain" id="PRO_0000033642" description="Transcription initiation factor IIB, 1st part" evidence="1">
    <location>
        <begin position="1"/>
        <end position="99"/>
    </location>
</feature>
<feature type="chain" id="PRO_0000033643" description="Endonuclease Mja Tfb" evidence="1">
    <location>
        <begin position="100"/>
        <end position="434"/>
    </location>
</feature>
<feature type="chain" id="PRO_0000033644" description="Transcription initiation factor IIB, 2nd part" evidence="1">
    <location>
        <begin position="435"/>
        <end position="673"/>
    </location>
</feature>
<feature type="domain" description="DOD-type homing endonuclease">
    <location>
        <begin position="238"/>
        <end position="357"/>
    </location>
</feature>
<feature type="repeat" description="1">
    <location>
        <begin position="490"/>
        <end position="573"/>
    </location>
</feature>
<feature type="repeat" description="2">
    <location>
        <begin position="584"/>
        <end position="665"/>
    </location>
</feature>
<feature type="zinc finger region" description="TFIIB-type" evidence="2">
    <location>
        <begin position="38"/>
        <end position="69"/>
    </location>
</feature>
<feature type="binding site" evidence="2">
    <location>
        <position position="42"/>
    </location>
    <ligand>
        <name>Zn(2+)</name>
        <dbReference type="ChEBI" id="CHEBI:29105"/>
    </ligand>
</feature>
<feature type="binding site" evidence="2">
    <location>
        <position position="45"/>
    </location>
    <ligand>
        <name>Zn(2+)</name>
        <dbReference type="ChEBI" id="CHEBI:29105"/>
    </ligand>
</feature>
<feature type="binding site" evidence="2">
    <location>
        <position position="61"/>
    </location>
    <ligand>
        <name>Zn(2+)</name>
        <dbReference type="ChEBI" id="CHEBI:29105"/>
    </ligand>
</feature>
<feature type="binding site" evidence="2">
    <location>
        <position position="64"/>
    </location>
    <ligand>
        <name>Zn(2+)</name>
        <dbReference type="ChEBI" id="CHEBI:29105"/>
    </ligand>
</feature>
<feature type="strand" evidence="4">
    <location>
        <begin position="106"/>
        <end position="111"/>
    </location>
</feature>
<feature type="strand" evidence="4">
    <location>
        <begin position="114"/>
        <end position="119"/>
    </location>
</feature>
<feature type="helix" evidence="4">
    <location>
        <begin position="120"/>
        <end position="129"/>
    </location>
</feature>
<feature type="strand" evidence="4">
    <location>
        <begin position="134"/>
        <end position="137"/>
    </location>
</feature>
<feature type="strand" evidence="4">
    <location>
        <begin position="140"/>
        <end position="144"/>
    </location>
</feature>
<feature type="strand" evidence="4">
    <location>
        <begin position="146"/>
        <end position="153"/>
    </location>
</feature>
<feature type="strand" evidence="4">
    <location>
        <begin position="159"/>
        <end position="163"/>
    </location>
</feature>
<feature type="strand" evidence="4">
    <location>
        <begin position="166"/>
        <end position="171"/>
    </location>
</feature>
<feature type="strand" evidence="4">
    <location>
        <begin position="175"/>
        <end position="180"/>
    </location>
</feature>
<feature type="helix" evidence="4">
    <location>
        <begin position="181"/>
        <end position="183"/>
    </location>
</feature>
<feature type="strand" evidence="4">
    <location>
        <begin position="184"/>
        <end position="188"/>
    </location>
</feature>
<feature type="strand" evidence="4">
    <location>
        <begin position="192"/>
        <end position="198"/>
    </location>
</feature>
<feature type="strand" evidence="4">
    <location>
        <begin position="201"/>
        <end position="206"/>
    </location>
</feature>
<feature type="helix" evidence="4">
    <location>
        <begin position="207"/>
        <end position="209"/>
    </location>
</feature>
<feature type="strand" evidence="4">
    <location>
        <begin position="215"/>
        <end position="225"/>
    </location>
</feature>
<feature type="strand" evidence="4">
    <location>
        <begin position="394"/>
        <end position="405"/>
    </location>
</feature>
<feature type="strand" evidence="4">
    <location>
        <begin position="408"/>
        <end position="416"/>
    </location>
</feature>
<feature type="turn" evidence="4">
    <location>
        <begin position="418"/>
        <end position="420"/>
    </location>
</feature>
<feature type="strand" evidence="4">
    <location>
        <begin position="422"/>
        <end position="429"/>
    </location>
</feature>
<feature type="strand" evidence="4">
    <location>
        <begin position="431"/>
        <end position="434"/>
    </location>
</feature>
<accession>Q58192</accession>
<proteinExistence type="evidence at protein level"/>
<keyword id="KW-0002">3D-structure</keyword>
<keyword id="KW-0068">Autocatalytic cleavage</keyword>
<keyword id="KW-0255">Endonuclease</keyword>
<keyword id="KW-0378">Hydrolase</keyword>
<keyword id="KW-0404">Intron homing</keyword>
<keyword id="KW-0479">Metal-binding</keyword>
<keyword id="KW-0540">Nuclease</keyword>
<keyword id="KW-0651">Protein splicing</keyword>
<keyword id="KW-1185">Reference proteome</keyword>
<keyword id="KW-0677">Repeat</keyword>
<keyword id="KW-0804">Transcription</keyword>
<keyword id="KW-0805">Transcription regulation</keyword>
<keyword id="KW-0862">Zinc</keyword>
<keyword id="KW-0863">Zinc-finger</keyword>
<sequence>MVWLMEALKTKENETTKEKKLTTKVEKSEKKEENVREEEIVCPICGSKEVVKDYERAEIVCAKCGCVIKEKLFDIGPEWRAFDHEQKIKRCRVGAPMTYSVDYNEPIIIKENGEIKVVKIGELIDKIIENSENIRREGILEIAKCKGIEVIAFNSNYKFKFMPVSEVSRHPVSEMFEIVVEGNKKVRVTRSHSVFTIRDNEVVPIRVDELKVGDILVLAKELPNIEEDIEIDKKFSKILGYIIAEGYYDDKKIVLSYDYNEKEFINETIDYFKSLNSDITIYSKDLNIQIEVKNKKIINLLKKLRVKNKRIPSIIFKSPYEIKKSFIDGIFNGKDAKVFVSKELAEDVIFLLLQIKENATINKKSINDIEVYEVRRITNIYTNRKLEKLINSDFIFLKIKEINKVEPTSGYAYDLTVPNAENFVAGFGGFVLHNTIHDKGLSTVIDWRNKDSYGKDLSANKRAQLYRLRKWQRRIRVSDAAERNLAFALSELDRITSKLGLPRHVRENAAIIYRGAVEKGLIRGRSIEGVVAAAIYAACRRCRVPRTLDEIAEASRVDRKEIGRTYRFLARELNIKLTPTNPIDYVPRFASELGLPGEVESKAIQILQQAAEKGLTSGRGPTGVAAAAIYIASVLLGCRRTQREVAEVAGVTEVTIRNRYKELTEHLDIDVTL</sequence>
<gene>
    <name type="primary">tfb</name>
    <name type="ordered locus">MJ0782</name>
</gene>
<reference key="1">
    <citation type="journal article" date="1996" name="Science">
        <title>Complete genome sequence of the methanogenic archaeon, Methanococcus jannaschii.</title>
        <authorList>
            <person name="Bult C.J."/>
            <person name="White O."/>
            <person name="Olsen G.J."/>
            <person name="Zhou L."/>
            <person name="Fleischmann R.D."/>
            <person name="Sutton G.G."/>
            <person name="Blake J.A."/>
            <person name="FitzGerald L.M."/>
            <person name="Clayton R.A."/>
            <person name="Gocayne J.D."/>
            <person name="Kerlavage A.R."/>
            <person name="Dougherty B.A."/>
            <person name="Tomb J.-F."/>
            <person name="Adams M.D."/>
            <person name="Reich C.I."/>
            <person name="Overbeek R."/>
            <person name="Kirkness E.F."/>
            <person name="Weinstock K.G."/>
            <person name="Merrick J.M."/>
            <person name="Glodek A."/>
            <person name="Scott J.L."/>
            <person name="Geoghagen N.S.M."/>
            <person name="Weidman J.F."/>
            <person name="Fuhrmann J.L."/>
            <person name="Nguyen D."/>
            <person name="Utterback T.R."/>
            <person name="Kelley J.M."/>
            <person name="Peterson J.D."/>
            <person name="Sadow P.W."/>
            <person name="Hanna M.C."/>
            <person name="Cotton M.D."/>
            <person name="Roberts K.M."/>
            <person name="Hurst M.A."/>
            <person name="Kaine B.P."/>
            <person name="Borodovsky M."/>
            <person name="Klenk H.-P."/>
            <person name="Fraser C.M."/>
            <person name="Smith H.O."/>
            <person name="Woese C.R."/>
            <person name="Venter J.C."/>
        </authorList>
    </citation>
    <scope>NUCLEOTIDE SEQUENCE [LARGE SCALE GENOMIC DNA]</scope>
    <source>
        <strain>ATCC 43067 / DSM 2661 / JAL-1 / JCM 10045 / NBRC 100440</strain>
    </source>
</reference>
<name>TF2B_METJA</name>
<evidence type="ECO:0000255" key="1"/>
<evidence type="ECO:0000255" key="2">
    <source>
        <dbReference type="PROSITE-ProRule" id="PRU00469"/>
    </source>
</evidence>
<evidence type="ECO:0000305" key="3"/>
<evidence type="ECO:0007829" key="4">
    <source>
        <dbReference type="PDB" id="5O9J"/>
    </source>
</evidence>
<protein>
    <recommendedName>
        <fullName>Transcription initiation factor IIB</fullName>
        <shortName>TFIIB</shortName>
    </recommendedName>
    <component>
        <recommendedName>
            <fullName>Endonuclease Mja Tfb</fullName>
            <ecNumber>3.1.-.-</ecNumber>
        </recommendedName>
        <alternativeName>
            <fullName>Mja TFIIB intein</fullName>
        </alternativeName>
        <alternativeName>
            <fullName>Mja Tfb intein</fullName>
        </alternativeName>
    </component>
</protein>
<comment type="function">
    <text>Stabilizes TBP binding to an archaeal box-A promoter. Also responsible for recruiting RNA polymerase II to the pre-initiation complex (DNA-TBP-TFIIB).</text>
</comment>
<comment type="PTM">
    <text evidence="3">This protein undergoes a protein self splicing that involves a post-translational excision of the intervening region (intein) followed by peptide ligation.</text>
</comment>
<comment type="similarity">
    <text evidence="3">Belongs to the TFIIB family.</text>
</comment>
<dbReference type="EC" id="3.1.-.-"/>
<dbReference type="EMBL" id="L77117">
    <property type="protein sequence ID" value="AAB98771.1"/>
    <property type="molecule type" value="Genomic_DNA"/>
</dbReference>
<dbReference type="PIR" id="F64397">
    <property type="entry name" value="F64397"/>
</dbReference>
<dbReference type="PDB" id="5O9J">
    <property type="method" value="X-ray"/>
    <property type="resolution" value="2.00 A"/>
    <property type="chains" value="A/B=101-225, A/B=356-435"/>
</dbReference>
<dbReference type="PDBsum" id="5O9J"/>
<dbReference type="SMR" id="Q58192"/>
<dbReference type="FunCoup" id="Q58192">
    <property type="interactions" value="2"/>
</dbReference>
<dbReference type="STRING" id="243232.MJ_0782"/>
<dbReference type="MEROPS" id="N10.007"/>
<dbReference type="PaxDb" id="243232-MJ_0782"/>
<dbReference type="EnsemblBacteria" id="AAB98771">
    <property type="protein sequence ID" value="AAB98771"/>
    <property type="gene ID" value="MJ_0782"/>
</dbReference>
<dbReference type="KEGG" id="mja:MJ_0782"/>
<dbReference type="eggNOG" id="arCOG01981">
    <property type="taxonomic scope" value="Archaea"/>
</dbReference>
<dbReference type="HOGENOM" id="CLU_026356_0_0_2"/>
<dbReference type="InParanoid" id="Q58192"/>
<dbReference type="PhylomeDB" id="Q58192"/>
<dbReference type="Proteomes" id="UP000000805">
    <property type="component" value="Chromosome"/>
</dbReference>
<dbReference type="GO" id="GO:0097550">
    <property type="term" value="C:transcription preinitiation complex"/>
    <property type="evidence" value="ECO:0000318"/>
    <property type="project" value="GO_Central"/>
</dbReference>
<dbReference type="GO" id="GO:0003700">
    <property type="term" value="F:DNA-binding transcription factor activity"/>
    <property type="evidence" value="ECO:0007669"/>
    <property type="project" value="UniProtKB-UniRule"/>
</dbReference>
<dbReference type="GO" id="GO:0004519">
    <property type="term" value="F:endonuclease activity"/>
    <property type="evidence" value="ECO:0007669"/>
    <property type="project" value="UniProtKB-KW"/>
</dbReference>
<dbReference type="GO" id="GO:0017025">
    <property type="term" value="F:TBP-class protein binding"/>
    <property type="evidence" value="ECO:0007669"/>
    <property type="project" value="InterPro"/>
</dbReference>
<dbReference type="GO" id="GO:0008270">
    <property type="term" value="F:zinc ion binding"/>
    <property type="evidence" value="ECO:0007669"/>
    <property type="project" value="UniProtKB-UniRule"/>
</dbReference>
<dbReference type="GO" id="GO:0006352">
    <property type="term" value="P:DNA-templated transcription initiation"/>
    <property type="evidence" value="ECO:0000318"/>
    <property type="project" value="GO_Central"/>
</dbReference>
<dbReference type="GO" id="GO:0016539">
    <property type="term" value="P:intein-mediated protein splicing"/>
    <property type="evidence" value="ECO:0007669"/>
    <property type="project" value="InterPro"/>
</dbReference>
<dbReference type="GO" id="GO:0006314">
    <property type="term" value="P:intron homing"/>
    <property type="evidence" value="ECO:0007669"/>
    <property type="project" value="UniProtKB-KW"/>
</dbReference>
<dbReference type="GO" id="GO:0070897">
    <property type="term" value="P:transcription preinitiation complex assembly"/>
    <property type="evidence" value="ECO:0007669"/>
    <property type="project" value="InterPro"/>
</dbReference>
<dbReference type="CDD" id="cd20549">
    <property type="entry name" value="CYCLIN_TFIIB_archaea_like_rpt1"/>
    <property type="match status" value="1"/>
</dbReference>
<dbReference type="CDD" id="cd20550">
    <property type="entry name" value="CYCLIN_TFIIB_archaea_like_rpt2"/>
    <property type="match status" value="1"/>
</dbReference>
<dbReference type="CDD" id="cd00081">
    <property type="entry name" value="Hint"/>
    <property type="match status" value="1"/>
</dbReference>
<dbReference type="FunFam" id="2.170.16.10:FF:000013">
    <property type="entry name" value="Replication factor C small subunit"/>
    <property type="match status" value="1"/>
</dbReference>
<dbReference type="FunFam" id="1.10.472.10:FF:000023">
    <property type="entry name" value="Transcription initiation factor IIB"/>
    <property type="match status" value="1"/>
</dbReference>
<dbReference type="FunFam" id="1.10.472.170:FF:000010">
    <property type="entry name" value="Transcription initiation factor IIB"/>
    <property type="match status" value="1"/>
</dbReference>
<dbReference type="FunFam" id="2.20.25.10:FF:000037">
    <property type="entry name" value="Transcription initiation factor IIB"/>
    <property type="match status" value="1"/>
</dbReference>
<dbReference type="Gene3D" id="1.10.472.170">
    <property type="match status" value="1"/>
</dbReference>
<dbReference type="Gene3D" id="2.20.25.10">
    <property type="match status" value="1"/>
</dbReference>
<dbReference type="Gene3D" id="1.10.472.10">
    <property type="entry name" value="Cyclin-like"/>
    <property type="match status" value="1"/>
</dbReference>
<dbReference type="Gene3D" id="2.170.16.10">
    <property type="entry name" value="Hedgehog/Intein (Hint) domain"/>
    <property type="match status" value="2"/>
</dbReference>
<dbReference type="HAMAP" id="MF_00383">
    <property type="entry name" value="TF2B_arch"/>
    <property type="match status" value="1"/>
</dbReference>
<dbReference type="InterPro" id="IPR013763">
    <property type="entry name" value="Cyclin-like_dom"/>
</dbReference>
<dbReference type="InterPro" id="IPR036915">
    <property type="entry name" value="Cyclin-like_sf"/>
</dbReference>
<dbReference type="InterPro" id="IPR003586">
    <property type="entry name" value="Hint_dom_C"/>
</dbReference>
<dbReference type="InterPro" id="IPR003587">
    <property type="entry name" value="Hint_dom_N"/>
</dbReference>
<dbReference type="InterPro" id="IPR036844">
    <property type="entry name" value="Hint_dom_sf"/>
</dbReference>
<dbReference type="InterPro" id="IPR027434">
    <property type="entry name" value="Homing_endonucl"/>
</dbReference>
<dbReference type="InterPro" id="IPR006142">
    <property type="entry name" value="INTEIN"/>
</dbReference>
<dbReference type="InterPro" id="IPR030934">
    <property type="entry name" value="Intein_C"/>
</dbReference>
<dbReference type="InterPro" id="IPR004042">
    <property type="entry name" value="Intein_endonuc_central"/>
</dbReference>
<dbReference type="InterPro" id="IPR006141">
    <property type="entry name" value="Intein_N"/>
</dbReference>
<dbReference type="InterPro" id="IPR000812">
    <property type="entry name" value="TFIIB"/>
</dbReference>
<dbReference type="InterPro" id="IPR023484">
    <property type="entry name" value="TFIIB_arc"/>
</dbReference>
<dbReference type="InterPro" id="IPR023486">
    <property type="entry name" value="TFIIB_CS"/>
</dbReference>
<dbReference type="InterPro" id="IPR013150">
    <property type="entry name" value="TFIIB_cyclin"/>
</dbReference>
<dbReference type="InterPro" id="IPR013137">
    <property type="entry name" value="Znf_TFIIB"/>
</dbReference>
<dbReference type="NCBIfam" id="TIGR01443">
    <property type="entry name" value="intein_Cterm"/>
    <property type="match status" value="1"/>
</dbReference>
<dbReference type="NCBIfam" id="TIGR01445">
    <property type="entry name" value="intein_Nterm"/>
    <property type="match status" value="1"/>
</dbReference>
<dbReference type="NCBIfam" id="NF001658">
    <property type="entry name" value="PRK00423.1"/>
    <property type="match status" value="1"/>
</dbReference>
<dbReference type="PANTHER" id="PTHR11618:SF13">
    <property type="entry name" value="TRANSCRIPTION INITIATION FACTOR IIB"/>
    <property type="match status" value="1"/>
</dbReference>
<dbReference type="PANTHER" id="PTHR11618">
    <property type="entry name" value="TRANSCRIPTION INITIATION FACTOR IIB-RELATED"/>
    <property type="match status" value="1"/>
</dbReference>
<dbReference type="Pfam" id="PF14890">
    <property type="entry name" value="Intein_splicing"/>
    <property type="match status" value="1"/>
</dbReference>
<dbReference type="Pfam" id="PF00382">
    <property type="entry name" value="TFIIB"/>
    <property type="match status" value="2"/>
</dbReference>
<dbReference type="Pfam" id="PF08271">
    <property type="entry name" value="Zn_Ribbon_TF"/>
    <property type="match status" value="1"/>
</dbReference>
<dbReference type="PRINTS" id="PR00379">
    <property type="entry name" value="INTEIN"/>
</dbReference>
<dbReference type="PRINTS" id="PR00685">
    <property type="entry name" value="TIFACTORIIB"/>
</dbReference>
<dbReference type="SMART" id="SM00385">
    <property type="entry name" value="CYCLIN"/>
    <property type="match status" value="2"/>
</dbReference>
<dbReference type="SMART" id="SM00305">
    <property type="entry name" value="HintC"/>
    <property type="match status" value="1"/>
</dbReference>
<dbReference type="SMART" id="SM00306">
    <property type="entry name" value="HintN"/>
    <property type="match status" value="1"/>
</dbReference>
<dbReference type="SUPFAM" id="SSF47954">
    <property type="entry name" value="Cyclin-like"/>
    <property type="match status" value="2"/>
</dbReference>
<dbReference type="SUPFAM" id="SSF51294">
    <property type="entry name" value="Hedgehog/intein (Hint) domain"/>
    <property type="match status" value="1"/>
</dbReference>
<dbReference type="SUPFAM" id="SSF55608">
    <property type="entry name" value="Homing endonucleases"/>
    <property type="match status" value="1"/>
</dbReference>
<dbReference type="SUPFAM" id="SSF57783">
    <property type="entry name" value="Zinc beta-ribbon"/>
    <property type="match status" value="1"/>
</dbReference>
<dbReference type="PROSITE" id="PS50818">
    <property type="entry name" value="INTEIN_C_TER"/>
    <property type="match status" value="1"/>
</dbReference>
<dbReference type="PROSITE" id="PS50819">
    <property type="entry name" value="INTEIN_ENDONUCLEASE"/>
    <property type="match status" value="1"/>
</dbReference>
<dbReference type="PROSITE" id="PS50817">
    <property type="entry name" value="INTEIN_N_TER"/>
    <property type="match status" value="1"/>
</dbReference>
<dbReference type="PROSITE" id="PS00782">
    <property type="entry name" value="TFIIB"/>
    <property type="match status" value="2"/>
</dbReference>
<dbReference type="PROSITE" id="PS51134">
    <property type="entry name" value="ZF_TFIIB"/>
    <property type="match status" value="1"/>
</dbReference>
<organism>
    <name type="scientific">Methanocaldococcus jannaschii (strain ATCC 43067 / DSM 2661 / JAL-1 / JCM 10045 / NBRC 100440)</name>
    <name type="common">Methanococcus jannaschii</name>
    <dbReference type="NCBI Taxonomy" id="243232"/>
    <lineage>
        <taxon>Archaea</taxon>
        <taxon>Methanobacteriati</taxon>
        <taxon>Methanobacteriota</taxon>
        <taxon>Methanomada group</taxon>
        <taxon>Methanococci</taxon>
        <taxon>Methanococcales</taxon>
        <taxon>Methanocaldococcaceae</taxon>
        <taxon>Methanocaldococcus</taxon>
    </lineage>
</organism>